<dbReference type="EMBL" id="CP000613">
    <property type="protein sequence ID" value="ACI99453.1"/>
    <property type="molecule type" value="Genomic_DNA"/>
</dbReference>
<dbReference type="SMR" id="B6IP33"/>
<dbReference type="STRING" id="414684.RC1_2062"/>
<dbReference type="KEGG" id="rce:RC1_2062"/>
<dbReference type="eggNOG" id="COG1671">
    <property type="taxonomic scope" value="Bacteria"/>
</dbReference>
<dbReference type="HOGENOM" id="CLU_106619_2_1_5"/>
<dbReference type="OrthoDB" id="9798918at2"/>
<dbReference type="Proteomes" id="UP000001591">
    <property type="component" value="Chromosome"/>
</dbReference>
<dbReference type="CDD" id="cd18720">
    <property type="entry name" value="PIN_YqxD-like"/>
    <property type="match status" value="1"/>
</dbReference>
<dbReference type="HAMAP" id="MF_00489">
    <property type="entry name" value="UPF0178"/>
    <property type="match status" value="1"/>
</dbReference>
<dbReference type="InterPro" id="IPR003791">
    <property type="entry name" value="UPF0178"/>
</dbReference>
<dbReference type="NCBIfam" id="NF001095">
    <property type="entry name" value="PRK00124.1"/>
    <property type="match status" value="1"/>
</dbReference>
<dbReference type="PANTHER" id="PTHR35146">
    <property type="entry name" value="UPF0178 PROTEIN YAII"/>
    <property type="match status" value="1"/>
</dbReference>
<dbReference type="PANTHER" id="PTHR35146:SF1">
    <property type="entry name" value="UPF0178 PROTEIN YAII"/>
    <property type="match status" value="1"/>
</dbReference>
<dbReference type="Pfam" id="PF02639">
    <property type="entry name" value="DUF188"/>
    <property type="match status" value="1"/>
</dbReference>
<comment type="similarity">
    <text evidence="1">Belongs to the UPF0178 family.</text>
</comment>
<feature type="chain" id="PRO_1000126205" description="UPF0178 protein RC1_2062">
    <location>
        <begin position="1"/>
        <end position="154"/>
    </location>
</feature>
<name>Y2062_RHOCS</name>
<accession>B6IP33</accession>
<evidence type="ECO:0000255" key="1">
    <source>
        <dbReference type="HAMAP-Rule" id="MF_00489"/>
    </source>
</evidence>
<sequence>MLDIFIDADACPVKEETFRVALRYDLRVFLVANAPLRLPPQGRVELVVVPGSFDAADDWIAERIDQGDIAVTSDIPLAKRCLDKGARVVPPNGRQFTPANIGAALASRALMQDLREMARADGTALRGNAPFSAQDRSRFLQELDTVINAVRRGR</sequence>
<reference key="1">
    <citation type="submission" date="2007-03" db="EMBL/GenBank/DDBJ databases">
        <title>Genome sequence of Rhodospirillum centenum.</title>
        <authorList>
            <person name="Touchman J.W."/>
            <person name="Bauer C."/>
            <person name="Blankenship R.E."/>
        </authorList>
    </citation>
    <scope>NUCLEOTIDE SEQUENCE [LARGE SCALE GENOMIC DNA]</scope>
    <source>
        <strain>ATCC 51521 / SW</strain>
    </source>
</reference>
<gene>
    <name type="ordered locus">RC1_2062</name>
</gene>
<keyword id="KW-1185">Reference proteome</keyword>
<protein>
    <recommendedName>
        <fullName evidence="1">UPF0178 protein RC1_2062</fullName>
    </recommendedName>
</protein>
<organism>
    <name type="scientific">Rhodospirillum centenum (strain ATCC 51521 / SW)</name>
    <dbReference type="NCBI Taxonomy" id="414684"/>
    <lineage>
        <taxon>Bacteria</taxon>
        <taxon>Pseudomonadati</taxon>
        <taxon>Pseudomonadota</taxon>
        <taxon>Alphaproteobacteria</taxon>
        <taxon>Rhodospirillales</taxon>
        <taxon>Rhodospirillaceae</taxon>
        <taxon>Rhodospirillum</taxon>
    </lineage>
</organism>
<proteinExistence type="inferred from homology"/>